<gene>
    <name evidence="1" type="primary">psaA</name>
</gene>
<geneLocation type="chloroplast"/>
<dbReference type="EC" id="1.97.1.12" evidence="1"/>
<dbReference type="EMBL" id="AP004638">
    <property type="protein sequence ID" value="BAB84216.1"/>
    <property type="molecule type" value="Genomic_DNA"/>
</dbReference>
<dbReference type="EMBL" id="AF180023">
    <property type="protein sequence ID" value="AAF29824.1"/>
    <property type="molecule type" value="Genomic_DNA"/>
</dbReference>
<dbReference type="RefSeq" id="NP_569629.1">
    <property type="nucleotide sequence ID" value="NC_003386.1"/>
</dbReference>
<dbReference type="SMR" id="Q9MUJ2"/>
<dbReference type="GeneID" id="2545133"/>
<dbReference type="GO" id="GO:0009535">
    <property type="term" value="C:chloroplast thylakoid membrane"/>
    <property type="evidence" value="ECO:0007669"/>
    <property type="project" value="UniProtKB-SubCell"/>
</dbReference>
<dbReference type="GO" id="GO:0009522">
    <property type="term" value="C:photosystem I"/>
    <property type="evidence" value="ECO:0007669"/>
    <property type="project" value="UniProtKB-KW"/>
</dbReference>
<dbReference type="GO" id="GO:0051539">
    <property type="term" value="F:4 iron, 4 sulfur cluster binding"/>
    <property type="evidence" value="ECO:0007669"/>
    <property type="project" value="UniProtKB-KW"/>
</dbReference>
<dbReference type="GO" id="GO:0016168">
    <property type="term" value="F:chlorophyll binding"/>
    <property type="evidence" value="ECO:0007669"/>
    <property type="project" value="UniProtKB-KW"/>
</dbReference>
<dbReference type="GO" id="GO:0009055">
    <property type="term" value="F:electron transfer activity"/>
    <property type="evidence" value="ECO:0007669"/>
    <property type="project" value="UniProtKB-UniRule"/>
</dbReference>
<dbReference type="GO" id="GO:0000287">
    <property type="term" value="F:magnesium ion binding"/>
    <property type="evidence" value="ECO:0007669"/>
    <property type="project" value="UniProtKB-UniRule"/>
</dbReference>
<dbReference type="GO" id="GO:0016491">
    <property type="term" value="F:oxidoreductase activity"/>
    <property type="evidence" value="ECO:0007669"/>
    <property type="project" value="UniProtKB-KW"/>
</dbReference>
<dbReference type="GO" id="GO:0015979">
    <property type="term" value="P:photosynthesis"/>
    <property type="evidence" value="ECO:0007669"/>
    <property type="project" value="UniProtKB-UniRule"/>
</dbReference>
<dbReference type="FunFam" id="1.20.1130.10:FF:000001">
    <property type="entry name" value="Photosystem I P700 chlorophyll a apoprotein A2"/>
    <property type="match status" value="1"/>
</dbReference>
<dbReference type="Gene3D" id="1.20.1130.10">
    <property type="entry name" value="Photosystem I PsaA/PsaB"/>
    <property type="match status" value="1"/>
</dbReference>
<dbReference type="HAMAP" id="MF_00458">
    <property type="entry name" value="PSI_PsaA"/>
    <property type="match status" value="1"/>
</dbReference>
<dbReference type="InterPro" id="IPR006243">
    <property type="entry name" value="PSI_PsaA"/>
</dbReference>
<dbReference type="InterPro" id="IPR001280">
    <property type="entry name" value="PSI_PsaA/B"/>
</dbReference>
<dbReference type="InterPro" id="IPR020586">
    <property type="entry name" value="PSI_PsaA/B_CS"/>
</dbReference>
<dbReference type="InterPro" id="IPR036408">
    <property type="entry name" value="PSI_PsaA/B_sf"/>
</dbReference>
<dbReference type="NCBIfam" id="TIGR01335">
    <property type="entry name" value="psaA"/>
    <property type="match status" value="1"/>
</dbReference>
<dbReference type="PANTHER" id="PTHR30128">
    <property type="entry name" value="OUTER MEMBRANE PROTEIN, OMPA-RELATED"/>
    <property type="match status" value="1"/>
</dbReference>
<dbReference type="PANTHER" id="PTHR30128:SF19">
    <property type="entry name" value="PHOTOSYSTEM I P700 CHLOROPHYLL A APOPROTEIN A1-RELATED"/>
    <property type="match status" value="1"/>
</dbReference>
<dbReference type="Pfam" id="PF00223">
    <property type="entry name" value="PsaA_PsaB"/>
    <property type="match status" value="1"/>
</dbReference>
<dbReference type="PIRSF" id="PIRSF002905">
    <property type="entry name" value="PSI_A"/>
    <property type="match status" value="1"/>
</dbReference>
<dbReference type="PRINTS" id="PR00257">
    <property type="entry name" value="PHOTSYSPSAAB"/>
</dbReference>
<dbReference type="SUPFAM" id="SSF81558">
    <property type="entry name" value="Photosystem I subunits PsaA/PsaB"/>
    <property type="match status" value="1"/>
</dbReference>
<dbReference type="PROSITE" id="PS00419">
    <property type="entry name" value="PHOTOSYSTEM_I_PSAAB"/>
    <property type="match status" value="1"/>
</dbReference>
<name>PSAA_PSINU</name>
<reference key="1">
    <citation type="journal article" date="2004" name="Mol. Biol. Evol.">
        <title>Chloroplast phylogeny indicates that bryophytes are monophyletic.</title>
        <authorList>
            <person name="Nishiyama T."/>
            <person name="Wolf P.G."/>
            <person name="Kugita M."/>
            <person name="Sinclair R.B."/>
            <person name="Sugita M."/>
            <person name="Sugiura C."/>
            <person name="Wakasugi T."/>
            <person name="Yamada K."/>
            <person name="Yoshinaga K."/>
            <person name="Yamaguchi K."/>
            <person name="Ueda K."/>
            <person name="Hasebe M."/>
        </authorList>
    </citation>
    <scope>NUCLEOTIDE SEQUENCE [LARGE SCALE GENOMIC DNA]</scope>
    <source>
        <strain>Kingyoku</strain>
    </source>
</reference>
<reference key="2">
    <citation type="journal article" date="2000" name="Mol. Biol. Evol.">
        <title>Error, bias, and long-branch attraction in data for two chloroplast photosystem genes in seed plants.</title>
        <authorList>
            <person name="Sanderson M.J."/>
            <person name="Wojciechowski M.F."/>
            <person name="Hu J.-M."/>
            <person name="Sher Khan T."/>
            <person name="Brady S.G."/>
        </authorList>
    </citation>
    <scope>NUCLEOTIDE SEQUENCE [GENOMIC DNA] OF 12-730</scope>
</reference>
<feature type="chain" id="PRO_0000088573" description="Photosystem I P700 chlorophyll a apoprotein A1">
    <location>
        <begin position="1"/>
        <end position="750"/>
    </location>
</feature>
<feature type="transmembrane region" description="Helical; Name=I" evidence="1">
    <location>
        <begin position="70"/>
        <end position="93"/>
    </location>
</feature>
<feature type="transmembrane region" description="Helical; Name=II" evidence="1">
    <location>
        <begin position="156"/>
        <end position="179"/>
    </location>
</feature>
<feature type="transmembrane region" description="Helical; Name=III" evidence="1">
    <location>
        <begin position="195"/>
        <end position="219"/>
    </location>
</feature>
<feature type="transmembrane region" description="Helical; Name=IV" evidence="1">
    <location>
        <begin position="291"/>
        <end position="309"/>
    </location>
</feature>
<feature type="transmembrane region" description="Helical; Name=V" evidence="1">
    <location>
        <begin position="346"/>
        <end position="369"/>
    </location>
</feature>
<feature type="transmembrane region" description="Helical; Name=VI" evidence="1">
    <location>
        <begin position="385"/>
        <end position="411"/>
    </location>
</feature>
<feature type="transmembrane region" description="Helical; Name=VII" evidence="1">
    <location>
        <begin position="433"/>
        <end position="455"/>
    </location>
</feature>
<feature type="transmembrane region" description="Helical; Name=VIII" evidence="1">
    <location>
        <begin position="531"/>
        <end position="549"/>
    </location>
</feature>
<feature type="transmembrane region" description="Helical; Name=IX" evidence="1">
    <location>
        <begin position="589"/>
        <end position="610"/>
    </location>
</feature>
<feature type="transmembrane region" description="Helical; Name=X" evidence="1">
    <location>
        <begin position="664"/>
        <end position="686"/>
    </location>
</feature>
<feature type="transmembrane region" description="Helical; Name=XI" evidence="1">
    <location>
        <begin position="724"/>
        <end position="744"/>
    </location>
</feature>
<feature type="binding site" evidence="1">
    <location>
        <position position="573"/>
    </location>
    <ligand>
        <name>[4Fe-4S] cluster</name>
        <dbReference type="ChEBI" id="CHEBI:49883"/>
        <note>ligand shared between dimeric partners</note>
    </ligand>
</feature>
<feature type="binding site" evidence="1">
    <location>
        <position position="582"/>
    </location>
    <ligand>
        <name>[4Fe-4S] cluster</name>
        <dbReference type="ChEBI" id="CHEBI:49883"/>
        <note>ligand shared between dimeric partners</note>
    </ligand>
</feature>
<feature type="binding site" description="axial binding residue" evidence="1">
    <location>
        <position position="675"/>
    </location>
    <ligand>
        <name>chlorophyll a'</name>
        <dbReference type="ChEBI" id="CHEBI:189419"/>
        <label>A1</label>
    </ligand>
    <ligandPart>
        <name>Mg</name>
        <dbReference type="ChEBI" id="CHEBI:25107"/>
    </ligandPart>
</feature>
<feature type="binding site" description="axial binding residue" evidence="1">
    <location>
        <position position="683"/>
    </location>
    <ligand>
        <name>chlorophyll a</name>
        <dbReference type="ChEBI" id="CHEBI:58416"/>
        <label>A3</label>
    </ligand>
    <ligandPart>
        <name>Mg</name>
        <dbReference type="ChEBI" id="CHEBI:25107"/>
    </ligandPart>
</feature>
<feature type="binding site" evidence="1">
    <location>
        <position position="691"/>
    </location>
    <ligand>
        <name>chlorophyll a</name>
        <dbReference type="ChEBI" id="CHEBI:58416"/>
        <label>A3</label>
    </ligand>
</feature>
<feature type="binding site" evidence="1">
    <location>
        <position position="692"/>
    </location>
    <ligand>
        <name>phylloquinone</name>
        <dbReference type="ChEBI" id="CHEBI:18067"/>
        <label>A</label>
    </ligand>
</feature>
<accession>Q9MUJ2</accession>
<protein>
    <recommendedName>
        <fullName evidence="1">Photosystem I P700 chlorophyll a apoprotein A1</fullName>
        <ecNumber evidence="1">1.97.1.12</ecNumber>
    </recommendedName>
    <alternativeName>
        <fullName evidence="1">PSI-A</fullName>
    </alternativeName>
    <alternativeName>
        <fullName evidence="1">PsaA</fullName>
    </alternativeName>
</protein>
<keyword id="KW-0004">4Fe-4S</keyword>
<keyword id="KW-0148">Chlorophyll</keyword>
<keyword id="KW-0150">Chloroplast</keyword>
<keyword id="KW-0157">Chromophore</keyword>
<keyword id="KW-0249">Electron transport</keyword>
<keyword id="KW-0408">Iron</keyword>
<keyword id="KW-0411">Iron-sulfur</keyword>
<keyword id="KW-0460">Magnesium</keyword>
<keyword id="KW-0472">Membrane</keyword>
<keyword id="KW-0479">Metal-binding</keyword>
<keyword id="KW-0560">Oxidoreductase</keyword>
<keyword id="KW-0602">Photosynthesis</keyword>
<keyword id="KW-0603">Photosystem I</keyword>
<keyword id="KW-0934">Plastid</keyword>
<keyword id="KW-0793">Thylakoid</keyword>
<keyword id="KW-0812">Transmembrane</keyword>
<keyword id="KW-1133">Transmembrane helix</keyword>
<keyword id="KW-0813">Transport</keyword>
<evidence type="ECO:0000255" key="1">
    <source>
        <dbReference type="HAMAP-Rule" id="MF_00458"/>
    </source>
</evidence>
<organism>
    <name type="scientific">Psilotum nudum</name>
    <name type="common">Whisk fern</name>
    <name type="synonym">Lycopodium nudum</name>
    <dbReference type="NCBI Taxonomy" id="3240"/>
    <lineage>
        <taxon>Eukaryota</taxon>
        <taxon>Viridiplantae</taxon>
        <taxon>Streptophyta</taxon>
        <taxon>Embryophyta</taxon>
        <taxon>Tracheophyta</taxon>
        <taxon>Polypodiopsida</taxon>
        <taxon>Ophioglossidae</taxon>
        <taxon>Psilotales</taxon>
        <taxon>Psilotaceae</taxon>
        <taxon>Psilotum</taxon>
    </lineage>
</organism>
<sequence>MTIRSPEPEVKILVERDPVKTSLEKWAQPGHFSRTLAKGPNTTTWIWNLHADSHDFDSHTNDLEEISRKVFSAHFGQLAIIFVWLSGMYFHGARFSNYEAWLSDPIHIKPSAQVVWPIVGQEILNGDVGGGFQGIQITSGFFQIWRASGITSELQLYCTAIGALIFATLMLFAGWFHYHKAAPKLAWFQDVESMLNHHLAGLLGLGSLAWAGHQVHVSLPINQLLDAGVDPKEIPLPHEFILNRDLLAQLYPSFAKGLIPFFTLNWSEYSDFLTFRGGLNPVTGGLWLTDTVHHHLAIAVLFLVAGHMYRTNWSIGHSIKEILEAHEGPFTGEGHKGIFEILTTSWHAQLALNLAMLGSLTIIVAHHMYSMPPYPYLAIDYGTQLSLFTHHMWIGGFLVVGAAAHAAIFMVRDYDPTTQYNNLLDRVLRHRDAIISHLNWVCIFLGFHSFGLYIHNDTMSALGRPQDMFSDTAIQLQPIFAQWVQNTHASAPGLTAPNAIASTSLTWGGDNLIAVGGKVALLPIPLGTADFLVHHIHAFTIHVTVLILLKGVLFARSSRLIPDKANLGFRFPCDGPGRGGTCQVSAWDHVFLGLFWMYNSISIVIFHFSWKMQSDVWGSINDQGVINHITGGNFAQSSTTINGWLRDFLWAQASQVIQSYGSSLSAYGLLFLGAHFVWAFSLMFLFSGRGYWQELIESIIWAHNKLKVAPAIQPRALSIVQGRAVGVAHYLLGGIATTWAFFLARIIAVG</sequence>
<comment type="function">
    <text>PsaA and PsaB bind P700, the primary electron donor of photosystem I (PSI), as well as the electron acceptors A0, A1 and FX. PSI is a plastocyanin-ferredoxin oxidoreductase, converting photonic excitation into a charge separation, which transfers an electron from the donor P700 chlorophyll pair to the spectroscopically characterized acceptors A0, A1, FX, FA and FB in turn. Oxidized P700 is reduced on the lumenal side of the thylakoid membrane by plastocyanin.</text>
</comment>
<comment type="catalytic activity">
    <reaction evidence="1">
        <text>reduced [plastocyanin] + hnu + oxidized [2Fe-2S]-[ferredoxin] = oxidized [plastocyanin] + reduced [2Fe-2S]-[ferredoxin]</text>
        <dbReference type="Rhea" id="RHEA:30407"/>
        <dbReference type="Rhea" id="RHEA-COMP:10000"/>
        <dbReference type="Rhea" id="RHEA-COMP:10001"/>
        <dbReference type="Rhea" id="RHEA-COMP:10039"/>
        <dbReference type="Rhea" id="RHEA-COMP:10040"/>
        <dbReference type="ChEBI" id="CHEBI:29036"/>
        <dbReference type="ChEBI" id="CHEBI:30212"/>
        <dbReference type="ChEBI" id="CHEBI:33737"/>
        <dbReference type="ChEBI" id="CHEBI:33738"/>
        <dbReference type="ChEBI" id="CHEBI:49552"/>
        <dbReference type="EC" id="1.97.1.12"/>
    </reaction>
</comment>
<comment type="cofactor">
    <text evidence="1">P700 is a chlorophyll a/chlorophyll a' dimer, A0 is one or more chlorophyll a, A1 is one or both phylloquinones and FX is a shared 4Fe-4S iron-sulfur center.</text>
</comment>
<comment type="subunit">
    <text evidence="1">The PsaA/B heterodimer binds the P700 chlorophyll special pair and subsequent electron acceptors. PSI consists of a core antenna complex that captures photons, and an electron transfer chain that converts photonic excitation into a charge separation. The eukaryotic PSI reaction center is composed of at least 11 subunits.</text>
</comment>
<comment type="subcellular location">
    <subcellularLocation>
        <location evidence="1">Plastid</location>
        <location evidence="1">Chloroplast thylakoid membrane</location>
        <topology evidence="1">Multi-pass membrane protein</topology>
    </subcellularLocation>
</comment>
<comment type="similarity">
    <text evidence="1">Belongs to the PsaA/PsaB family.</text>
</comment>
<proteinExistence type="inferred from homology"/>